<keyword id="KW-0002">3D-structure</keyword>
<keyword id="KW-0007">Acetylation</keyword>
<keyword id="KW-0903">Direct protein sequencing</keyword>
<keyword id="KW-0539">Nucleus</keyword>
<keyword id="KW-1185">Reference proteome</keyword>
<keyword id="KW-0687">Ribonucleoprotein</keyword>
<keyword id="KW-0689">Ribosomal protein</keyword>
<evidence type="ECO:0000250" key="1">
    <source>
        <dbReference type="UniProtKB" id="P25398"/>
    </source>
</evidence>
<evidence type="ECO:0000250" key="2">
    <source>
        <dbReference type="UniProtKB" id="P80455"/>
    </source>
</evidence>
<evidence type="ECO:0000269" key="3">
    <source>
    </source>
</evidence>
<evidence type="ECO:0000269" key="4">
    <source ref="5"/>
</evidence>
<evidence type="ECO:0000305" key="5"/>
<evidence type="ECO:0007744" key="6">
    <source>
    </source>
</evidence>
<gene>
    <name type="primary">Rps12</name>
</gene>
<dbReference type="EMBL" id="X15962">
    <property type="protein sequence ID" value="CAA34084.1"/>
    <property type="molecule type" value="mRNA"/>
</dbReference>
<dbReference type="EMBL" id="AK002848">
    <property type="protein sequence ID" value="BAB22404.1"/>
    <property type="molecule type" value="mRNA"/>
</dbReference>
<dbReference type="EMBL" id="AK008057">
    <property type="protein sequence ID" value="BAB25433.1"/>
    <property type="molecule type" value="mRNA"/>
</dbReference>
<dbReference type="EMBL" id="AK032757">
    <property type="protein sequence ID" value="BAC28009.1"/>
    <property type="molecule type" value="mRNA"/>
</dbReference>
<dbReference type="EMBL" id="AK166923">
    <property type="protein sequence ID" value="BAE39118.1"/>
    <property type="molecule type" value="mRNA"/>
</dbReference>
<dbReference type="EMBL" id="AK166992">
    <property type="protein sequence ID" value="BAE39171.1"/>
    <property type="molecule type" value="mRNA"/>
</dbReference>
<dbReference type="EMBL" id="AK168324">
    <property type="protein sequence ID" value="BAE40263.1"/>
    <property type="molecule type" value="mRNA"/>
</dbReference>
<dbReference type="EMBL" id="AK169215">
    <property type="protein sequence ID" value="BAE40986.1"/>
    <property type="molecule type" value="mRNA"/>
</dbReference>
<dbReference type="EMBL" id="BC002079">
    <property type="protein sequence ID" value="AAH02079.1"/>
    <property type="molecule type" value="mRNA"/>
</dbReference>
<dbReference type="EMBL" id="BC089338">
    <property type="protein sequence ID" value="AAH89338.1"/>
    <property type="molecule type" value="mRNA"/>
</dbReference>
<dbReference type="EMBL" id="BC089339">
    <property type="protein sequence ID" value="AAH89339.1"/>
    <property type="molecule type" value="mRNA"/>
</dbReference>
<dbReference type="EMBL" id="BC090257">
    <property type="protein sequence ID" value="AAH90257.1"/>
    <property type="molecule type" value="mRNA"/>
</dbReference>
<dbReference type="EMBL" id="BC092044">
    <property type="protein sequence ID" value="AAH92044.1"/>
    <property type="molecule type" value="mRNA"/>
</dbReference>
<dbReference type="EMBL" id="BC096653">
    <property type="protein sequence ID" value="AAH96653.1"/>
    <property type="molecule type" value="mRNA"/>
</dbReference>
<dbReference type="EMBL" id="BC099377">
    <property type="protein sequence ID" value="AAH99377.1"/>
    <property type="molecule type" value="mRNA"/>
</dbReference>
<dbReference type="CCDS" id="CCDS23733.1"/>
<dbReference type="PIR" id="S05492">
    <property type="entry name" value="R3MS12"/>
</dbReference>
<dbReference type="RefSeq" id="NP_001394370.1">
    <property type="nucleotide sequence ID" value="NM_001407441.1"/>
</dbReference>
<dbReference type="RefSeq" id="NP_001394371.1">
    <property type="nucleotide sequence ID" value="NM_001407442.1"/>
</dbReference>
<dbReference type="RefSeq" id="NP_035425.2">
    <property type="nucleotide sequence ID" value="NM_011295.6"/>
</dbReference>
<dbReference type="PDB" id="7LS1">
    <property type="method" value="EM"/>
    <property type="resolution" value="3.30 A"/>
    <property type="chains" value="M3=1-132"/>
</dbReference>
<dbReference type="PDB" id="7LS2">
    <property type="method" value="EM"/>
    <property type="resolution" value="3.10 A"/>
    <property type="chains" value="M3=1-132"/>
</dbReference>
<dbReference type="PDBsum" id="7LS1"/>
<dbReference type="PDBsum" id="7LS2"/>
<dbReference type="EMDB" id="EMD-23500"/>
<dbReference type="EMDB" id="EMD-23501"/>
<dbReference type="SMR" id="P63323"/>
<dbReference type="ComplexPortal" id="CPX-5261">
    <property type="entry name" value="40S cytosolic small ribosomal subunit"/>
</dbReference>
<dbReference type="FunCoup" id="P63323">
    <property type="interactions" value="2324"/>
</dbReference>
<dbReference type="IntAct" id="P63323">
    <property type="interactions" value="2"/>
</dbReference>
<dbReference type="MINT" id="P63323"/>
<dbReference type="STRING" id="10090.ENSMUSP00000151305"/>
<dbReference type="GlyGen" id="P63323">
    <property type="glycosylation" value="1 site, 1 O-linked glycan (1 site)"/>
</dbReference>
<dbReference type="iPTMnet" id="P63323"/>
<dbReference type="PhosphoSitePlus" id="P63323"/>
<dbReference type="SwissPalm" id="P63323"/>
<dbReference type="REPRODUCTION-2DPAGE" id="P63323"/>
<dbReference type="CPTAC" id="non-CPTAC-3669"/>
<dbReference type="jPOST" id="P63323"/>
<dbReference type="PaxDb" id="10090-ENSMUSP00000073581"/>
<dbReference type="PeptideAtlas" id="P63323"/>
<dbReference type="ProteomicsDB" id="256935"/>
<dbReference type="ProteomicsDB" id="328755"/>
<dbReference type="Pumba" id="P63323"/>
<dbReference type="TopDownProteomics" id="Q6ZWZ6"/>
<dbReference type="DNASU" id="20042"/>
<dbReference type="Ensembl" id="ENSMUST00000218107.2">
    <property type="protein sequence ID" value="ENSMUSP00000151305.2"/>
    <property type="gene ID" value="ENSMUSG00000061983.8"/>
</dbReference>
<dbReference type="Ensembl" id="ENSMUST00000220070.2">
    <property type="protein sequence ID" value="ENSMUSP00000151271.2"/>
    <property type="gene ID" value="ENSMUSG00000061983.8"/>
</dbReference>
<dbReference type="GeneID" id="20042"/>
<dbReference type="KEGG" id="mmu:20042"/>
<dbReference type="AGR" id="MGI:98105"/>
<dbReference type="CTD" id="6206"/>
<dbReference type="MGI" id="MGI:98105">
    <property type="gene designation" value="Rps12"/>
</dbReference>
<dbReference type="VEuPathDB" id="HostDB:ENSMUSG00000061983"/>
<dbReference type="eggNOG" id="KOG3406">
    <property type="taxonomic scope" value="Eukaryota"/>
</dbReference>
<dbReference type="GeneTree" id="ENSGT00390000018318"/>
<dbReference type="HOGENOM" id="CLU_110343_1_1_1"/>
<dbReference type="InParanoid" id="P63323"/>
<dbReference type="OMA" id="CAEHQIP"/>
<dbReference type="OrthoDB" id="10249311at2759"/>
<dbReference type="PhylomeDB" id="P63323"/>
<dbReference type="TreeFam" id="TF300196"/>
<dbReference type="Reactome" id="R-MMU-156827">
    <property type="pathway name" value="L13a-mediated translational silencing of Ceruloplasmin expression"/>
</dbReference>
<dbReference type="Reactome" id="R-MMU-1799339">
    <property type="pathway name" value="SRP-dependent cotranslational protein targeting to membrane"/>
</dbReference>
<dbReference type="Reactome" id="R-MMU-6791226">
    <property type="pathway name" value="Major pathway of rRNA processing in the nucleolus and cytosol"/>
</dbReference>
<dbReference type="Reactome" id="R-MMU-72649">
    <property type="pathway name" value="Translation initiation complex formation"/>
</dbReference>
<dbReference type="Reactome" id="R-MMU-72689">
    <property type="pathway name" value="Formation of a pool of free 40S subunits"/>
</dbReference>
<dbReference type="Reactome" id="R-MMU-72695">
    <property type="pathway name" value="Formation of the ternary complex, and subsequently, the 43S complex"/>
</dbReference>
<dbReference type="Reactome" id="R-MMU-72702">
    <property type="pathway name" value="Ribosomal scanning and start codon recognition"/>
</dbReference>
<dbReference type="Reactome" id="R-MMU-72706">
    <property type="pathway name" value="GTP hydrolysis and joining of the 60S ribosomal subunit"/>
</dbReference>
<dbReference type="Reactome" id="R-MMU-975956">
    <property type="pathway name" value="Nonsense Mediated Decay (NMD) independent of the Exon Junction Complex (EJC)"/>
</dbReference>
<dbReference type="Reactome" id="R-MMU-975957">
    <property type="pathway name" value="Nonsense Mediated Decay (NMD) enhanced by the Exon Junction Complex (EJC)"/>
</dbReference>
<dbReference type="BioGRID-ORCS" id="20042">
    <property type="hits" value="26 hits in 72 CRISPR screens"/>
</dbReference>
<dbReference type="ChiTaRS" id="Rps12">
    <property type="organism name" value="mouse"/>
</dbReference>
<dbReference type="ChiTaRS" id="Rps12-ps3">
    <property type="organism name" value="mouse"/>
</dbReference>
<dbReference type="PRO" id="PR:P63323"/>
<dbReference type="Proteomes" id="UP000000589">
    <property type="component" value="Chromosome 10"/>
</dbReference>
<dbReference type="RNAct" id="P63323">
    <property type="molecule type" value="protein"/>
</dbReference>
<dbReference type="Bgee" id="ENSMUSG00000061983">
    <property type="expression patterns" value="Expressed in floor plate of midbrain and 243 other cell types or tissues"/>
</dbReference>
<dbReference type="GO" id="GO:0005737">
    <property type="term" value="C:cytoplasm"/>
    <property type="evidence" value="ECO:0000303"/>
    <property type="project" value="ComplexPortal"/>
</dbReference>
<dbReference type="GO" id="GO:0005829">
    <property type="term" value="C:cytosol"/>
    <property type="evidence" value="ECO:0000304"/>
    <property type="project" value="Reactome"/>
</dbReference>
<dbReference type="GO" id="GO:0022627">
    <property type="term" value="C:cytosolic small ribosomal subunit"/>
    <property type="evidence" value="ECO:0000303"/>
    <property type="project" value="ComplexPortal"/>
</dbReference>
<dbReference type="GO" id="GO:0005730">
    <property type="term" value="C:nucleolus"/>
    <property type="evidence" value="ECO:0007669"/>
    <property type="project" value="UniProtKB-SubCell"/>
</dbReference>
<dbReference type="GO" id="GO:0098794">
    <property type="term" value="C:postsynapse"/>
    <property type="evidence" value="ECO:0000303"/>
    <property type="project" value="SynGO"/>
</dbReference>
<dbReference type="GO" id="GO:0098793">
    <property type="term" value="C:presynapse"/>
    <property type="evidence" value="ECO:0000303"/>
    <property type="project" value="SynGO"/>
</dbReference>
<dbReference type="GO" id="GO:0005840">
    <property type="term" value="C:ribosome"/>
    <property type="evidence" value="ECO:0000303"/>
    <property type="project" value="SynGO"/>
</dbReference>
<dbReference type="GO" id="GO:0032040">
    <property type="term" value="C:small-subunit processome"/>
    <property type="evidence" value="ECO:0000250"/>
    <property type="project" value="UniProtKB"/>
</dbReference>
<dbReference type="GO" id="GO:0045202">
    <property type="term" value="C:synapse"/>
    <property type="evidence" value="ECO:0000314"/>
    <property type="project" value="SynGO"/>
</dbReference>
<dbReference type="GO" id="GO:0003735">
    <property type="term" value="F:structural constituent of ribosome"/>
    <property type="evidence" value="ECO:0007669"/>
    <property type="project" value="InterPro"/>
</dbReference>
<dbReference type="GO" id="GO:0002181">
    <property type="term" value="P:cytoplasmic translation"/>
    <property type="evidence" value="ECO:0000303"/>
    <property type="project" value="ComplexPortal"/>
</dbReference>
<dbReference type="GO" id="GO:0042274">
    <property type="term" value="P:ribosomal small subunit biogenesis"/>
    <property type="evidence" value="ECO:0000250"/>
    <property type="project" value="UniProtKB"/>
</dbReference>
<dbReference type="GO" id="GO:0140242">
    <property type="term" value="P:translation at postsynapse"/>
    <property type="evidence" value="ECO:0000303"/>
    <property type="project" value="SynGO"/>
</dbReference>
<dbReference type="GO" id="GO:0140236">
    <property type="term" value="P:translation at presynapse"/>
    <property type="evidence" value="ECO:0000303"/>
    <property type="project" value="SynGO"/>
</dbReference>
<dbReference type="FunFam" id="3.30.1330.30:FF:000011">
    <property type="entry name" value="40S ribosomal protein S12"/>
    <property type="match status" value="1"/>
</dbReference>
<dbReference type="Gene3D" id="3.30.1330.30">
    <property type="match status" value="1"/>
</dbReference>
<dbReference type="InterPro" id="IPR029064">
    <property type="entry name" value="Ribosomal_eL30-like_sf"/>
</dbReference>
<dbReference type="InterPro" id="IPR004038">
    <property type="entry name" value="Ribosomal_eL8/eL30/eS12/Gad45"/>
</dbReference>
<dbReference type="InterPro" id="IPR000530">
    <property type="entry name" value="Ribosomal_eS12"/>
</dbReference>
<dbReference type="InterPro" id="IPR047860">
    <property type="entry name" value="Ribosomal_eS12_CS"/>
</dbReference>
<dbReference type="PANTHER" id="PTHR11843">
    <property type="entry name" value="40S RIBOSOMAL PROTEIN S12"/>
    <property type="match status" value="1"/>
</dbReference>
<dbReference type="Pfam" id="PF01248">
    <property type="entry name" value="Ribosomal_L7Ae"/>
    <property type="match status" value="1"/>
</dbReference>
<dbReference type="PRINTS" id="PR00972">
    <property type="entry name" value="RIBSOMALS12E"/>
</dbReference>
<dbReference type="SUPFAM" id="SSF55315">
    <property type="entry name" value="L30e-like"/>
    <property type="match status" value="1"/>
</dbReference>
<dbReference type="PROSITE" id="PS01189">
    <property type="entry name" value="RIBOSOMAL_S12E"/>
    <property type="match status" value="1"/>
</dbReference>
<comment type="function">
    <text evidence="1 2">Part of the small subunit (SSU) processome, first precursor of the small eukaryotic ribosomal subunit. During the assembly of the SSU processome in the nucleolus, many ribosome biogenesis factors, an RNA chaperone and ribosomal proteins associate with the nascent pre-rRNA and work in concert to generate RNA folding, modifications, rearrangements and cleavage as well as targeted degradation of pre-ribosomal RNA by the RNA exosome (By similarity). Subunit of the 40S ribosomal complex (By similarity).</text>
</comment>
<comment type="subunit">
    <text evidence="1 2">Part of the small subunit (SSU) processome, composed of more than 70 proteins and the RNA chaperone small nucleolar RNA (snoRNA) U3 (By similarity). Subunit of the 40S ribosomal complex (By similarity).</text>
</comment>
<comment type="subcellular location">
    <subcellularLocation>
        <location evidence="1">Nucleus</location>
        <location evidence="1">Nucleolus</location>
    </subcellularLocation>
</comment>
<comment type="similarity">
    <text evidence="5">Belongs to the eukaryotic ribosomal protein eS12 family.</text>
</comment>
<protein>
    <recommendedName>
        <fullName evidence="5">Small ribosomal subunit protein eS12</fullName>
    </recommendedName>
    <alternativeName>
        <fullName>40S ribosomal protein S12</fullName>
    </alternativeName>
</protein>
<proteinExistence type="evidence at protein level"/>
<feature type="initiator methionine" description="Removed" evidence="4">
    <location>
        <position position="1"/>
    </location>
</feature>
<feature type="chain" id="PRO_0000122324" description="Small ribosomal subunit protein eS12">
    <location>
        <begin position="2"/>
        <end position="132"/>
    </location>
</feature>
<feature type="modified residue" description="N-acetylalanine" evidence="4">
    <location>
        <position position="2"/>
    </location>
</feature>
<feature type="modified residue" description="N6-succinyllysine" evidence="6">
    <location>
        <position position="129"/>
    </location>
</feature>
<feature type="sequence variant" description="Requires 2 nucleotide substitutions." evidence="3">
    <original>C</original>
    <variation>L</variation>
    <location>
        <position position="69"/>
    </location>
</feature>
<reference key="1">
    <citation type="journal article" date="1989" name="Nucleic Acids Res.">
        <title>Cloning and sequencing of mouse ribosomal protein S12 cDNA.</title>
        <authorList>
            <person name="Ayane M."/>
            <person name="Nielson P."/>
            <person name="Koehler G."/>
        </authorList>
    </citation>
    <scope>NUCLEOTIDE SEQUENCE [MRNA]</scope>
    <scope>VARIANT LEU-69</scope>
    <source>
        <strain>BALB/cJ</strain>
    </source>
</reference>
<reference key="2">
    <citation type="journal article" date="2001" name="Nature">
        <title>Functional annotation of a full-length mouse cDNA collection.</title>
        <authorList>
            <person name="Kawai J."/>
            <person name="Shinagawa A."/>
            <person name="Shibata K."/>
            <person name="Yoshino M."/>
            <person name="Itoh M."/>
            <person name="Ishii Y."/>
            <person name="Arakawa T."/>
            <person name="Hara A."/>
            <person name="Fukunishi Y."/>
            <person name="Konno H."/>
            <person name="Adachi J."/>
            <person name="Fukuda S."/>
            <person name="Aizawa K."/>
            <person name="Izawa M."/>
            <person name="Nishi K."/>
            <person name="Kiyosawa H."/>
            <person name="Kondo S."/>
            <person name="Yamanaka I."/>
            <person name="Saito T."/>
            <person name="Okazaki Y."/>
            <person name="Gojobori T."/>
            <person name="Bono H."/>
            <person name="Kasukawa T."/>
            <person name="Saito R."/>
            <person name="Kadota K."/>
            <person name="Matsuda H.A."/>
            <person name="Ashburner M."/>
            <person name="Batalov S."/>
            <person name="Casavant T."/>
            <person name="Fleischmann W."/>
            <person name="Gaasterland T."/>
            <person name="Gissi C."/>
            <person name="King B."/>
            <person name="Kochiwa H."/>
            <person name="Kuehl P."/>
            <person name="Lewis S."/>
            <person name="Matsuo Y."/>
            <person name="Nikaido I."/>
            <person name="Pesole G."/>
            <person name="Quackenbush J."/>
            <person name="Schriml L.M."/>
            <person name="Staubli F."/>
            <person name="Suzuki R."/>
            <person name="Tomita M."/>
            <person name="Wagner L."/>
            <person name="Washio T."/>
            <person name="Sakai K."/>
            <person name="Okido T."/>
            <person name="Furuno M."/>
            <person name="Aono H."/>
            <person name="Baldarelli R."/>
            <person name="Barsh G."/>
            <person name="Blake J."/>
            <person name="Boffelli D."/>
            <person name="Bojunga N."/>
            <person name="Carninci P."/>
            <person name="de Bonaldo M.F."/>
            <person name="Brownstein M.J."/>
            <person name="Bult C."/>
            <person name="Fletcher C."/>
            <person name="Fujita M."/>
            <person name="Gariboldi M."/>
            <person name="Gustincich S."/>
            <person name="Hill D."/>
            <person name="Hofmann M."/>
            <person name="Hume D.A."/>
            <person name="Kamiya M."/>
            <person name="Lee N.H."/>
            <person name="Lyons P."/>
            <person name="Marchionni L."/>
            <person name="Mashima J."/>
            <person name="Mazzarelli J."/>
            <person name="Mombaerts P."/>
            <person name="Nordone P."/>
            <person name="Ring B."/>
            <person name="Ringwald M."/>
            <person name="Rodriguez I."/>
            <person name="Sakamoto N."/>
            <person name="Sasaki H."/>
            <person name="Sato K."/>
            <person name="Schoenbach C."/>
            <person name="Seya T."/>
            <person name="Shibata Y."/>
            <person name="Storch K.-F."/>
            <person name="Suzuki H."/>
            <person name="Toyo-oka K."/>
            <person name="Wang K.H."/>
            <person name="Weitz C."/>
            <person name="Whittaker C."/>
            <person name="Wilming L."/>
            <person name="Wynshaw-Boris A."/>
            <person name="Yoshida K."/>
            <person name="Hasegawa Y."/>
            <person name="Kawaji H."/>
            <person name="Kohtsuki S."/>
            <person name="Hayashizaki Y."/>
        </authorList>
    </citation>
    <scope>NUCLEOTIDE SEQUENCE [LARGE SCALE MRNA]</scope>
    <source>
        <strain>C57BL/6J</strain>
    </source>
</reference>
<reference key="3">
    <citation type="journal article" date="2005" name="Science">
        <title>The transcriptional landscape of the mammalian genome.</title>
        <authorList>
            <person name="Carninci P."/>
            <person name="Kasukawa T."/>
            <person name="Katayama S."/>
            <person name="Gough J."/>
            <person name="Frith M.C."/>
            <person name="Maeda N."/>
            <person name="Oyama R."/>
            <person name="Ravasi T."/>
            <person name="Lenhard B."/>
            <person name="Wells C."/>
            <person name="Kodzius R."/>
            <person name="Shimokawa K."/>
            <person name="Bajic V.B."/>
            <person name="Brenner S.E."/>
            <person name="Batalov S."/>
            <person name="Forrest A.R."/>
            <person name="Zavolan M."/>
            <person name="Davis M.J."/>
            <person name="Wilming L.G."/>
            <person name="Aidinis V."/>
            <person name="Allen J.E."/>
            <person name="Ambesi-Impiombato A."/>
            <person name="Apweiler R."/>
            <person name="Aturaliya R.N."/>
            <person name="Bailey T.L."/>
            <person name="Bansal M."/>
            <person name="Baxter L."/>
            <person name="Beisel K.W."/>
            <person name="Bersano T."/>
            <person name="Bono H."/>
            <person name="Chalk A.M."/>
            <person name="Chiu K.P."/>
            <person name="Choudhary V."/>
            <person name="Christoffels A."/>
            <person name="Clutterbuck D.R."/>
            <person name="Crowe M.L."/>
            <person name="Dalla E."/>
            <person name="Dalrymple B.P."/>
            <person name="de Bono B."/>
            <person name="Della Gatta G."/>
            <person name="di Bernardo D."/>
            <person name="Down T."/>
            <person name="Engstrom P."/>
            <person name="Fagiolini M."/>
            <person name="Faulkner G."/>
            <person name="Fletcher C.F."/>
            <person name="Fukushima T."/>
            <person name="Furuno M."/>
            <person name="Futaki S."/>
            <person name="Gariboldi M."/>
            <person name="Georgii-Hemming P."/>
            <person name="Gingeras T.R."/>
            <person name="Gojobori T."/>
            <person name="Green R.E."/>
            <person name="Gustincich S."/>
            <person name="Harbers M."/>
            <person name="Hayashi Y."/>
            <person name="Hensch T.K."/>
            <person name="Hirokawa N."/>
            <person name="Hill D."/>
            <person name="Huminiecki L."/>
            <person name="Iacono M."/>
            <person name="Ikeo K."/>
            <person name="Iwama A."/>
            <person name="Ishikawa T."/>
            <person name="Jakt M."/>
            <person name="Kanapin A."/>
            <person name="Katoh M."/>
            <person name="Kawasawa Y."/>
            <person name="Kelso J."/>
            <person name="Kitamura H."/>
            <person name="Kitano H."/>
            <person name="Kollias G."/>
            <person name="Krishnan S.P."/>
            <person name="Kruger A."/>
            <person name="Kummerfeld S.K."/>
            <person name="Kurochkin I.V."/>
            <person name="Lareau L.F."/>
            <person name="Lazarevic D."/>
            <person name="Lipovich L."/>
            <person name="Liu J."/>
            <person name="Liuni S."/>
            <person name="McWilliam S."/>
            <person name="Madan Babu M."/>
            <person name="Madera M."/>
            <person name="Marchionni L."/>
            <person name="Matsuda H."/>
            <person name="Matsuzawa S."/>
            <person name="Miki H."/>
            <person name="Mignone F."/>
            <person name="Miyake S."/>
            <person name="Morris K."/>
            <person name="Mottagui-Tabar S."/>
            <person name="Mulder N."/>
            <person name="Nakano N."/>
            <person name="Nakauchi H."/>
            <person name="Ng P."/>
            <person name="Nilsson R."/>
            <person name="Nishiguchi S."/>
            <person name="Nishikawa S."/>
            <person name="Nori F."/>
            <person name="Ohara O."/>
            <person name="Okazaki Y."/>
            <person name="Orlando V."/>
            <person name="Pang K.C."/>
            <person name="Pavan W.J."/>
            <person name="Pavesi G."/>
            <person name="Pesole G."/>
            <person name="Petrovsky N."/>
            <person name="Piazza S."/>
            <person name="Reed J."/>
            <person name="Reid J.F."/>
            <person name="Ring B.Z."/>
            <person name="Ringwald M."/>
            <person name="Rost B."/>
            <person name="Ruan Y."/>
            <person name="Salzberg S.L."/>
            <person name="Sandelin A."/>
            <person name="Schneider C."/>
            <person name="Schoenbach C."/>
            <person name="Sekiguchi K."/>
            <person name="Semple C.A."/>
            <person name="Seno S."/>
            <person name="Sessa L."/>
            <person name="Sheng Y."/>
            <person name="Shibata Y."/>
            <person name="Shimada H."/>
            <person name="Shimada K."/>
            <person name="Silva D."/>
            <person name="Sinclair B."/>
            <person name="Sperling S."/>
            <person name="Stupka E."/>
            <person name="Sugiura K."/>
            <person name="Sultana R."/>
            <person name="Takenaka Y."/>
            <person name="Taki K."/>
            <person name="Tammoja K."/>
            <person name="Tan S.L."/>
            <person name="Tang S."/>
            <person name="Taylor M.S."/>
            <person name="Tegner J."/>
            <person name="Teichmann S.A."/>
            <person name="Ueda H.R."/>
            <person name="van Nimwegen E."/>
            <person name="Verardo R."/>
            <person name="Wei C.L."/>
            <person name="Yagi K."/>
            <person name="Yamanishi H."/>
            <person name="Zabarovsky E."/>
            <person name="Zhu S."/>
            <person name="Zimmer A."/>
            <person name="Hide W."/>
            <person name="Bult C."/>
            <person name="Grimmond S.M."/>
            <person name="Teasdale R.D."/>
            <person name="Liu E.T."/>
            <person name="Brusic V."/>
            <person name="Quackenbush J."/>
            <person name="Wahlestedt C."/>
            <person name="Mattick J.S."/>
            <person name="Hume D.A."/>
            <person name="Kai C."/>
            <person name="Sasaki D."/>
            <person name="Tomaru Y."/>
            <person name="Fukuda S."/>
            <person name="Kanamori-Katayama M."/>
            <person name="Suzuki M."/>
            <person name="Aoki J."/>
            <person name="Arakawa T."/>
            <person name="Iida J."/>
            <person name="Imamura K."/>
            <person name="Itoh M."/>
            <person name="Kato T."/>
            <person name="Kawaji H."/>
            <person name="Kawagashira N."/>
            <person name="Kawashima T."/>
            <person name="Kojima M."/>
            <person name="Kondo S."/>
            <person name="Konno H."/>
            <person name="Nakano K."/>
            <person name="Ninomiya N."/>
            <person name="Nishio T."/>
            <person name="Okada M."/>
            <person name="Plessy C."/>
            <person name="Shibata K."/>
            <person name="Shiraki T."/>
            <person name="Suzuki S."/>
            <person name="Tagami M."/>
            <person name="Waki K."/>
            <person name="Watahiki A."/>
            <person name="Okamura-Oho Y."/>
            <person name="Suzuki H."/>
            <person name="Kawai J."/>
            <person name="Hayashizaki Y."/>
        </authorList>
    </citation>
    <scope>NUCLEOTIDE SEQUENCE [LARGE SCALE MRNA]</scope>
    <source>
        <strain>C57BL/6J</strain>
    </source>
</reference>
<reference key="4">
    <citation type="journal article" date="2002" name="Proc. Natl. Acad. Sci. U.S.A.">
        <title>Generation and initial analysis of more than 15,000 full-length human and mouse cDNA sequences.</title>
        <authorList>
            <consortium name="Mammalian Gene Collection Program Team"/>
            <person name="Strausberg R.L."/>
            <person name="Feingold E.A."/>
            <person name="Grouse L.H."/>
            <person name="Derge J.G."/>
            <person name="Klausner R.D."/>
            <person name="Collins F.S."/>
            <person name="Wagner L."/>
            <person name="Shenmen C.M."/>
            <person name="Schuler G.D."/>
            <person name="Altschul S.F."/>
            <person name="Zeeberg B."/>
            <person name="Buetow K.H."/>
            <person name="Schaefer C.F."/>
            <person name="Bhat N.K."/>
            <person name="Hopkins R.F."/>
            <person name="Jordan H."/>
            <person name="Moore T."/>
            <person name="Max S.I."/>
            <person name="Wang J."/>
            <person name="Hsieh F."/>
            <person name="Diatchenko L."/>
            <person name="Marusina K."/>
            <person name="Farmer A.A."/>
            <person name="Rubin G.M."/>
            <person name="Hong L."/>
            <person name="Stapleton M."/>
            <person name="Soares M.B."/>
            <person name="Bonaldo M.F."/>
            <person name="Casavant T.L."/>
            <person name="Scheetz T.E."/>
            <person name="Brownstein M.J."/>
            <person name="Usdin T.B."/>
            <person name="Toshiyuki S."/>
            <person name="Carninci P."/>
            <person name="Prange C."/>
            <person name="Raha S.S."/>
            <person name="Loquellano N.A."/>
            <person name="Peters G.J."/>
            <person name="Abramson R.D."/>
            <person name="Mullahy S.J."/>
            <person name="Bosak S.A."/>
            <person name="McEwan P.J."/>
            <person name="McKernan K.J."/>
            <person name="Malek J.A."/>
            <person name="Gunaratne P.H."/>
            <person name="Richards S."/>
            <person name="Worley K.C."/>
            <person name="Hale S."/>
            <person name="Garcia A.M."/>
            <person name="Gay L.J."/>
            <person name="Hulyk S.W."/>
            <person name="Villalon D.K."/>
            <person name="Muzny D.M."/>
            <person name="Sodergren E.J."/>
            <person name="Lu X."/>
            <person name="Gibbs R.A."/>
            <person name="Fahey J."/>
            <person name="Helton E."/>
            <person name="Ketteman M."/>
            <person name="Madan A."/>
            <person name="Rodrigues S."/>
            <person name="Sanchez A."/>
            <person name="Whiting M."/>
            <person name="Madan A."/>
            <person name="Young A.C."/>
            <person name="Shevchenko Y."/>
            <person name="Bouffard G.G."/>
            <person name="Blakesley R.W."/>
            <person name="Touchman J.W."/>
            <person name="Green E.D."/>
            <person name="Dickson M.C."/>
            <person name="Rodriguez A.C."/>
            <person name="Grimwood J."/>
            <person name="Schmutz J."/>
            <person name="Myers R.M."/>
            <person name="Butterfield Y.S."/>
            <person name="Krzywinski M.I."/>
            <person name="Skalska U."/>
            <person name="Smailus D.E."/>
            <person name="Schnerch A."/>
            <person name="Schein J.E."/>
            <person name="Jones S.J."/>
            <person name="Marra M.A."/>
        </authorList>
    </citation>
    <scope>NUCLEOTIDE SEQUENCE [LARGE SCALE MRNA]</scope>
    <source>
        <strain>C57BL/6J</strain>
    </source>
</reference>
<reference key="5">
    <citation type="submission" date="2006-03" db="UniProtKB">
        <authorList>
            <person name="Kanor S."/>
            <person name="Quadroni M."/>
            <person name="Bienvenut W.V."/>
        </authorList>
    </citation>
    <scope>PROTEIN SEQUENCE OF 2-22; 102-111 AND 121-128</scope>
    <scope>CLEAVAGE OF INITIATOR METHIONINE</scope>
    <scope>ACETYLATION AT ALA-2</scope>
    <scope>IDENTIFICATION BY MASS SPECTROMETRY</scope>
    <source>
        <strain>C57BL/6J</strain>
        <tissue>Skeletal muscle</tissue>
    </source>
</reference>
<reference key="6">
    <citation type="journal article" date="2010" name="Cell">
        <title>A tissue-specific atlas of mouse protein phosphorylation and expression.</title>
        <authorList>
            <person name="Huttlin E.L."/>
            <person name="Jedrychowski M.P."/>
            <person name="Elias J.E."/>
            <person name="Goswami T."/>
            <person name="Rad R."/>
            <person name="Beausoleil S.A."/>
            <person name="Villen J."/>
            <person name="Haas W."/>
            <person name="Sowa M.E."/>
            <person name="Gygi S.P."/>
        </authorList>
    </citation>
    <scope>IDENTIFICATION BY MASS SPECTROMETRY [LARGE SCALE ANALYSIS]</scope>
    <source>
        <tissue>Brain</tissue>
        <tissue>Brown adipose tissue</tissue>
        <tissue>Heart</tissue>
        <tissue>Kidney</tissue>
        <tissue>Liver</tissue>
        <tissue>Lung</tissue>
        <tissue>Pancreas</tissue>
        <tissue>Spleen</tissue>
        <tissue>Testis</tissue>
    </source>
</reference>
<reference key="7">
    <citation type="journal article" date="2013" name="Mol. Cell">
        <title>SIRT5-mediated lysine desuccinylation impacts diverse metabolic pathways.</title>
        <authorList>
            <person name="Park J."/>
            <person name="Chen Y."/>
            <person name="Tishkoff D.X."/>
            <person name="Peng C."/>
            <person name="Tan M."/>
            <person name="Dai L."/>
            <person name="Xie Z."/>
            <person name="Zhang Y."/>
            <person name="Zwaans B.M."/>
            <person name="Skinner M.E."/>
            <person name="Lombard D.B."/>
            <person name="Zhao Y."/>
        </authorList>
    </citation>
    <scope>SUCCINYLATION [LARGE SCALE ANALYSIS] AT LYS-129</scope>
    <scope>IDENTIFICATION BY MASS SPECTROMETRY [LARGE SCALE ANALYSIS]</scope>
    <source>
        <tissue>Embryonic fibroblast</tissue>
    </source>
</reference>
<accession>P63323</accession>
<accession>P09388</accession>
<accession>P12728</accession>
<accession>Q6ZWZ6</accession>
<sequence length="132" mass="14515">MAEEGIAAGGVMDVNTALQEVLKTALIHDGLARGIREAAKALDKRQAHLCVLASNCDEPMYVKLVEALCAEHQINLIKVDDNKKLGEWVGLCKIDREGKPRKVVGCSCVVVKDYGKESQAKDVIEEYFKCKK</sequence>
<name>RS12_MOUSE</name>
<organism>
    <name type="scientific">Mus musculus</name>
    <name type="common">Mouse</name>
    <dbReference type="NCBI Taxonomy" id="10090"/>
    <lineage>
        <taxon>Eukaryota</taxon>
        <taxon>Metazoa</taxon>
        <taxon>Chordata</taxon>
        <taxon>Craniata</taxon>
        <taxon>Vertebrata</taxon>
        <taxon>Euteleostomi</taxon>
        <taxon>Mammalia</taxon>
        <taxon>Eutheria</taxon>
        <taxon>Euarchontoglires</taxon>
        <taxon>Glires</taxon>
        <taxon>Rodentia</taxon>
        <taxon>Myomorpha</taxon>
        <taxon>Muroidea</taxon>
        <taxon>Muridae</taxon>
        <taxon>Murinae</taxon>
        <taxon>Mus</taxon>
        <taxon>Mus</taxon>
    </lineage>
</organism>